<organism>
    <name type="scientific">Mus musculus</name>
    <name type="common">Mouse</name>
    <dbReference type="NCBI Taxonomy" id="10090"/>
    <lineage>
        <taxon>Eukaryota</taxon>
        <taxon>Metazoa</taxon>
        <taxon>Chordata</taxon>
        <taxon>Craniata</taxon>
        <taxon>Vertebrata</taxon>
        <taxon>Euteleostomi</taxon>
        <taxon>Mammalia</taxon>
        <taxon>Eutheria</taxon>
        <taxon>Euarchontoglires</taxon>
        <taxon>Glires</taxon>
        <taxon>Rodentia</taxon>
        <taxon>Myomorpha</taxon>
        <taxon>Muroidea</taxon>
        <taxon>Muridae</taxon>
        <taxon>Murinae</taxon>
        <taxon>Mus</taxon>
        <taxon>Mus</taxon>
    </lineage>
</organism>
<protein>
    <recommendedName>
        <fullName>Transmembrane protein 240</fullName>
    </recommendedName>
</protein>
<accession>B2RWJ3</accession>
<proteinExistence type="evidence at protein level"/>
<sequence>MSMSANTMIFMILGASIVMAIACLMDMNALLDRFHNYILPHLRGEDRVCHCNCGRHHIHYVIPYDGDQSVVDASENYFVTDNVTKQEIDLMLGLLLGFCISWFLVWMDGVLHCAVRAWRAGRRYDGSWTWLPKLCSLRELGRRPHRPFEEPTGNMVHVKQKLYHNGHPSPRHL</sequence>
<dbReference type="EMBL" id="AL670236">
    <property type="status" value="NOT_ANNOTATED_CDS"/>
    <property type="molecule type" value="Genomic_DNA"/>
</dbReference>
<dbReference type="EMBL" id="CH466594">
    <property type="protein sequence ID" value="EDL15027.1"/>
    <property type="molecule type" value="Genomic_DNA"/>
</dbReference>
<dbReference type="EMBL" id="BC147820">
    <property type="protein sequence ID" value="AAI47821.1"/>
    <property type="molecule type" value="mRNA"/>
</dbReference>
<dbReference type="EMBL" id="BC147826">
    <property type="protein sequence ID" value="AAI47827.1"/>
    <property type="molecule type" value="mRNA"/>
</dbReference>
<dbReference type="CCDS" id="CCDS51403.1"/>
<dbReference type="RefSeq" id="NP_001094976.1">
    <property type="nucleotide sequence ID" value="NM_001101506.1"/>
</dbReference>
<dbReference type="FunCoup" id="B2RWJ3">
    <property type="interactions" value="128"/>
</dbReference>
<dbReference type="IntAct" id="B2RWJ3">
    <property type="interactions" value="1"/>
</dbReference>
<dbReference type="STRING" id="10090.ENSMUSP00000127341"/>
<dbReference type="iPTMnet" id="B2RWJ3"/>
<dbReference type="PhosphoSitePlus" id="B2RWJ3"/>
<dbReference type="PaxDb" id="10090-ENSMUSP00000127341"/>
<dbReference type="ProteomicsDB" id="259470"/>
<dbReference type="Antibodypedia" id="77999">
    <property type="antibodies" value="34 antibodies from 9 providers"/>
</dbReference>
<dbReference type="Ensembl" id="ENSMUST00000127188.3">
    <property type="protein sequence ID" value="ENSMUSP00000127341.3"/>
    <property type="gene ID" value="ENSMUSG00000084845.11"/>
</dbReference>
<dbReference type="GeneID" id="381582"/>
<dbReference type="KEGG" id="mmu:381582"/>
<dbReference type="UCSC" id="uc012dqw.1">
    <property type="organism name" value="mouse"/>
</dbReference>
<dbReference type="AGR" id="MGI:3648074"/>
<dbReference type="CTD" id="339453"/>
<dbReference type="MGI" id="MGI:3648074">
    <property type="gene designation" value="Tmem240"/>
</dbReference>
<dbReference type="VEuPathDB" id="HostDB:ENSMUSG00000084845"/>
<dbReference type="eggNOG" id="ENOG502QWKH">
    <property type="taxonomic scope" value="Eukaryota"/>
</dbReference>
<dbReference type="GeneTree" id="ENSGT00400000023987"/>
<dbReference type="HOGENOM" id="CLU_145117_0_0_1"/>
<dbReference type="InParanoid" id="B2RWJ3"/>
<dbReference type="OMA" id="HHSQYDE"/>
<dbReference type="PhylomeDB" id="B2RWJ3"/>
<dbReference type="BioGRID-ORCS" id="381582">
    <property type="hits" value="3 hits in 78 CRISPR screens"/>
</dbReference>
<dbReference type="PRO" id="PR:B2RWJ3"/>
<dbReference type="Proteomes" id="UP000000589">
    <property type="component" value="Chromosome 4"/>
</dbReference>
<dbReference type="RNAct" id="B2RWJ3">
    <property type="molecule type" value="protein"/>
</dbReference>
<dbReference type="Bgee" id="ENSMUSG00000084845">
    <property type="expression patterns" value="Expressed in interventricular septum and 47 other cell types or tissues"/>
</dbReference>
<dbReference type="GO" id="GO:0150053">
    <property type="term" value="C:cerebellar climbing fiber to Purkinje cell synapse"/>
    <property type="evidence" value="ECO:0000314"/>
    <property type="project" value="SynGO"/>
</dbReference>
<dbReference type="GO" id="GO:0098688">
    <property type="term" value="C:parallel fiber to Purkinje cell synapse"/>
    <property type="evidence" value="ECO:0000314"/>
    <property type="project" value="SynGO"/>
</dbReference>
<dbReference type="GO" id="GO:0098839">
    <property type="term" value="C:postsynaptic density membrane"/>
    <property type="evidence" value="ECO:0000314"/>
    <property type="project" value="SynGO"/>
</dbReference>
<dbReference type="GO" id="GO:0097060">
    <property type="term" value="C:synaptic membrane"/>
    <property type="evidence" value="ECO:0000314"/>
    <property type="project" value="UniProtKB"/>
</dbReference>
<dbReference type="GO" id="GO:0160045">
    <property type="term" value="C:TMEM240-body"/>
    <property type="evidence" value="ECO:0000314"/>
    <property type="project" value="MGI"/>
</dbReference>
<dbReference type="InterPro" id="IPR027947">
    <property type="entry name" value="TMEM240"/>
</dbReference>
<dbReference type="PANTHER" id="PTHR28666">
    <property type="entry name" value="TRANSMEMBRANE PROTEIN 240"/>
    <property type="match status" value="1"/>
</dbReference>
<dbReference type="PANTHER" id="PTHR28666:SF1">
    <property type="entry name" value="TRANSMEMBRANE PROTEIN 240"/>
    <property type="match status" value="1"/>
</dbReference>
<dbReference type="Pfam" id="PF15207">
    <property type="entry name" value="TMEM240"/>
    <property type="match status" value="1"/>
</dbReference>
<keyword id="KW-1003">Cell membrane</keyword>
<keyword id="KW-0472">Membrane</keyword>
<keyword id="KW-0597">Phosphoprotein</keyword>
<keyword id="KW-1185">Reference proteome</keyword>
<keyword id="KW-0770">Synapse</keyword>
<keyword id="KW-0812">Transmembrane</keyword>
<keyword id="KW-1133">Transmembrane helix</keyword>
<feature type="chain" id="PRO_0000431907" description="Transmembrane protein 240">
    <location>
        <begin position="1"/>
        <end position="173"/>
    </location>
</feature>
<feature type="transmembrane region" description="Helical; Name=1" evidence="1">
    <location>
        <begin position="5"/>
        <end position="25"/>
    </location>
</feature>
<feature type="transmembrane region" description="Helical; Name=2" evidence="1">
    <location>
        <begin position="90"/>
        <end position="110"/>
    </location>
</feature>
<feature type="modified residue" description="Phosphoserine" evidence="2">
    <location>
        <position position="169"/>
    </location>
</feature>
<comment type="subcellular location">
    <subcellularLocation>
        <location evidence="2">Synapse</location>
    </subcellularLocation>
    <subcellularLocation>
        <location evidence="3">Cell membrane</location>
        <topology evidence="3">Multi-pass membrane protein</topology>
    </subcellularLocation>
</comment>
<evidence type="ECO:0000255" key="1"/>
<evidence type="ECO:0000269" key="2">
    <source>
    </source>
</evidence>
<evidence type="ECO:0000305" key="3"/>
<reference key="1">
    <citation type="journal article" date="2009" name="PLoS Biol.">
        <title>Lineage-specific biology revealed by a finished genome assembly of the mouse.</title>
        <authorList>
            <person name="Church D.M."/>
            <person name="Goodstadt L."/>
            <person name="Hillier L.W."/>
            <person name="Zody M.C."/>
            <person name="Goldstein S."/>
            <person name="She X."/>
            <person name="Bult C.J."/>
            <person name="Agarwala R."/>
            <person name="Cherry J.L."/>
            <person name="DiCuccio M."/>
            <person name="Hlavina W."/>
            <person name="Kapustin Y."/>
            <person name="Meric P."/>
            <person name="Maglott D."/>
            <person name="Birtle Z."/>
            <person name="Marques A.C."/>
            <person name="Graves T."/>
            <person name="Zhou S."/>
            <person name="Teague B."/>
            <person name="Potamousis K."/>
            <person name="Churas C."/>
            <person name="Place M."/>
            <person name="Herschleb J."/>
            <person name="Runnheim R."/>
            <person name="Forrest D."/>
            <person name="Amos-Landgraf J."/>
            <person name="Schwartz D.C."/>
            <person name="Cheng Z."/>
            <person name="Lindblad-Toh K."/>
            <person name="Eichler E.E."/>
            <person name="Ponting C.P."/>
        </authorList>
    </citation>
    <scope>NUCLEOTIDE SEQUENCE [LARGE SCALE GENOMIC DNA]</scope>
    <source>
        <strain>C57BL/6J</strain>
    </source>
</reference>
<reference key="2">
    <citation type="submission" date="2005-07" db="EMBL/GenBank/DDBJ databases">
        <authorList>
            <person name="Mural R.J."/>
            <person name="Adams M.D."/>
            <person name="Myers E.W."/>
            <person name="Smith H.O."/>
            <person name="Venter J.C."/>
        </authorList>
    </citation>
    <scope>NUCLEOTIDE SEQUENCE [LARGE SCALE GENOMIC DNA]</scope>
</reference>
<reference key="3">
    <citation type="journal article" date="2004" name="Genome Res.">
        <title>The status, quality, and expansion of the NIH full-length cDNA project: the Mammalian Gene Collection (MGC).</title>
        <authorList>
            <consortium name="The MGC Project Team"/>
        </authorList>
    </citation>
    <scope>NUCLEOTIDE SEQUENCE [LARGE SCALE MRNA]</scope>
    <source>
        <tissue>Brain</tissue>
    </source>
</reference>
<reference key="4">
    <citation type="journal article" date="2012" name="Mol. Cell. Proteomics">
        <title>Global identification and characterization of both O-GlcNAcylation and phosphorylation at the murine synapse.</title>
        <authorList>
            <person name="Trinidad J.C."/>
            <person name="Barkan D.T."/>
            <person name="Gulledge B.F."/>
            <person name="Thalhammer A."/>
            <person name="Sali A."/>
            <person name="Schoepfer R."/>
            <person name="Burlingame A.L."/>
        </authorList>
    </citation>
    <scope>IDENTIFICATION BY MASS SPECTROMETRY</scope>
    <scope>PHOSPHORYLATION AT SER-169</scope>
    <scope>SUBCELLULAR LOCATION</scope>
</reference>
<name>TM240_MOUSE</name>
<gene>
    <name type="primary">Tmem240</name>
    <name type="synonym">Gm5151</name>
</gene>